<organism>
    <name type="scientific">Burkholderia orbicola (strain AU 1054)</name>
    <dbReference type="NCBI Taxonomy" id="331271"/>
    <lineage>
        <taxon>Bacteria</taxon>
        <taxon>Pseudomonadati</taxon>
        <taxon>Pseudomonadota</taxon>
        <taxon>Betaproteobacteria</taxon>
        <taxon>Burkholderiales</taxon>
        <taxon>Burkholderiaceae</taxon>
        <taxon>Burkholderia</taxon>
        <taxon>Burkholderia cepacia complex</taxon>
        <taxon>Burkholderia orbicola</taxon>
    </lineage>
</organism>
<name>CHED_BURO1</name>
<dbReference type="EC" id="3.5.1.44" evidence="1"/>
<dbReference type="EMBL" id="CP000378">
    <property type="protein sequence ID" value="ABF77744.1"/>
    <property type="status" value="ALT_INIT"/>
    <property type="molecule type" value="Genomic_DNA"/>
</dbReference>
<dbReference type="SMR" id="Q1BRL1"/>
<dbReference type="HOGENOM" id="CLU_087854_0_0_4"/>
<dbReference type="GO" id="GO:0050568">
    <property type="term" value="F:protein-glutamine glutaminase activity"/>
    <property type="evidence" value="ECO:0007669"/>
    <property type="project" value="UniProtKB-UniRule"/>
</dbReference>
<dbReference type="GO" id="GO:0006935">
    <property type="term" value="P:chemotaxis"/>
    <property type="evidence" value="ECO:0007669"/>
    <property type="project" value="UniProtKB-UniRule"/>
</dbReference>
<dbReference type="CDD" id="cd16352">
    <property type="entry name" value="CheD"/>
    <property type="match status" value="1"/>
</dbReference>
<dbReference type="Gene3D" id="3.30.1330.200">
    <property type="match status" value="1"/>
</dbReference>
<dbReference type="HAMAP" id="MF_01440">
    <property type="entry name" value="CheD"/>
    <property type="match status" value="1"/>
</dbReference>
<dbReference type="InterPro" id="IPR038592">
    <property type="entry name" value="CheD-like_sf"/>
</dbReference>
<dbReference type="InterPro" id="IPR005659">
    <property type="entry name" value="Chemorcpt_Glu_NH3ase_CheD"/>
</dbReference>
<dbReference type="InterPro" id="IPR011324">
    <property type="entry name" value="Cytotoxic_necrot_fac-like_cat"/>
</dbReference>
<dbReference type="NCBIfam" id="NF010013">
    <property type="entry name" value="PRK13487.1"/>
    <property type="match status" value="1"/>
</dbReference>
<dbReference type="NCBIfam" id="NF010014">
    <property type="entry name" value="PRK13489.1"/>
    <property type="match status" value="1"/>
</dbReference>
<dbReference type="PANTHER" id="PTHR35147">
    <property type="entry name" value="CHEMORECEPTOR GLUTAMINE DEAMIDASE CHED-RELATED"/>
    <property type="match status" value="1"/>
</dbReference>
<dbReference type="PANTHER" id="PTHR35147:SF2">
    <property type="entry name" value="CHEMORECEPTOR GLUTAMINE DEAMIDASE CHED-RELATED"/>
    <property type="match status" value="1"/>
</dbReference>
<dbReference type="Pfam" id="PF03975">
    <property type="entry name" value="CheD"/>
    <property type="match status" value="1"/>
</dbReference>
<dbReference type="SUPFAM" id="SSF64438">
    <property type="entry name" value="CNF1/YfiH-like putative cysteine hydrolases"/>
    <property type="match status" value="1"/>
</dbReference>
<proteinExistence type="inferred from homology"/>
<comment type="function">
    <text evidence="1">Probably deamidates glutamine residues to glutamate on methyl-accepting chemotaxis receptors (MCPs), playing an important role in chemotaxis.</text>
</comment>
<comment type="catalytic activity">
    <reaction evidence="1">
        <text>L-glutaminyl-[protein] + H2O = L-glutamyl-[protein] + NH4(+)</text>
        <dbReference type="Rhea" id="RHEA:16441"/>
        <dbReference type="Rhea" id="RHEA-COMP:10207"/>
        <dbReference type="Rhea" id="RHEA-COMP:10208"/>
        <dbReference type="ChEBI" id="CHEBI:15377"/>
        <dbReference type="ChEBI" id="CHEBI:28938"/>
        <dbReference type="ChEBI" id="CHEBI:29973"/>
        <dbReference type="ChEBI" id="CHEBI:30011"/>
        <dbReference type="EC" id="3.5.1.44"/>
    </reaction>
</comment>
<comment type="similarity">
    <text evidence="1">Belongs to the CheD family.</text>
</comment>
<comment type="sequence caution" evidence="3">
    <conflict type="erroneous initiation">
        <sequence resource="EMBL-CDS" id="ABF77744"/>
    </conflict>
</comment>
<protein>
    <recommendedName>
        <fullName evidence="1">Probable chemoreceptor glutamine deamidase CheD</fullName>
        <ecNumber evidence="1">3.5.1.44</ecNumber>
    </recommendedName>
</protein>
<accession>Q1BRL1</accession>
<reference key="1">
    <citation type="submission" date="2006-05" db="EMBL/GenBank/DDBJ databases">
        <title>Complete sequence of chromosome 1 of Burkholderia cenocepacia AU 1054.</title>
        <authorList>
            <consortium name="US DOE Joint Genome Institute"/>
            <person name="Copeland A."/>
            <person name="Lucas S."/>
            <person name="Lapidus A."/>
            <person name="Barry K."/>
            <person name="Detter J.C."/>
            <person name="Glavina del Rio T."/>
            <person name="Hammon N."/>
            <person name="Israni S."/>
            <person name="Dalin E."/>
            <person name="Tice H."/>
            <person name="Pitluck S."/>
            <person name="Chain P."/>
            <person name="Malfatti S."/>
            <person name="Shin M."/>
            <person name="Vergez L."/>
            <person name="Schmutz J."/>
            <person name="Larimer F."/>
            <person name="Land M."/>
            <person name="Hauser L."/>
            <person name="Kyrpides N."/>
            <person name="Lykidis A."/>
            <person name="LiPuma J.J."/>
            <person name="Konstantinidis K."/>
            <person name="Tiedje J.M."/>
            <person name="Richardson P."/>
        </authorList>
    </citation>
    <scope>NUCLEOTIDE SEQUENCE [LARGE SCALE GENOMIC DNA]</scope>
    <source>
        <strain>AU 1054</strain>
    </source>
</reference>
<evidence type="ECO:0000255" key="1">
    <source>
        <dbReference type="HAMAP-Rule" id="MF_01440"/>
    </source>
</evidence>
<evidence type="ECO:0000256" key="2">
    <source>
        <dbReference type="SAM" id="MobiDB-lite"/>
    </source>
</evidence>
<evidence type="ECO:0000305" key="3"/>
<sequence length="247" mass="26726">MSALLIATNRYFDNHFERPGVKLLPNEFYTTAEDMVLMTVLGSCVAACLHDPYAGIGGMNHFMLPDDGADPGAAASESMRYGAYAMEVLINELIKAGGRRERFEAKVFGGAAVLAGMTTINIGDRNADFVRRYLALERIRITAEDLQGVHPRKVAFMPHSGRAMVKKLRLQVPGVTEREAALAREADRLRAARTRAQVELFAAKRPAAPQPARPRIELFGGRGTAPGAGSPSAGSPYAANLSRKQEA</sequence>
<feature type="chain" id="PRO_0000251012" description="Probable chemoreceptor glutamine deamidase CheD">
    <location>
        <begin position="1"/>
        <end position="247"/>
    </location>
</feature>
<feature type="region of interest" description="Disordered" evidence="2">
    <location>
        <begin position="204"/>
        <end position="247"/>
    </location>
</feature>
<feature type="compositionally biased region" description="Low complexity" evidence="2">
    <location>
        <begin position="227"/>
        <end position="239"/>
    </location>
</feature>
<gene>
    <name evidence="1" type="primary">cheD</name>
    <name type="ordered locus">Bcen_2847</name>
</gene>
<keyword id="KW-0145">Chemotaxis</keyword>
<keyword id="KW-0378">Hydrolase</keyword>